<gene>
    <name evidence="1" type="primary">mhpE</name>
    <name type="ordered locus">b0352</name>
    <name type="ordered locus">JW0343</name>
</gene>
<evidence type="ECO:0000255" key="1">
    <source>
        <dbReference type="HAMAP-Rule" id="MF_01656"/>
    </source>
</evidence>
<evidence type="ECO:0000269" key="2">
    <source>
    </source>
</evidence>
<evidence type="ECO:0000269" key="3">
    <source>
    </source>
</evidence>
<evidence type="ECO:0000305" key="4"/>
<keyword id="KW-0058">Aromatic hydrocarbons catabolism</keyword>
<keyword id="KW-0456">Lyase</keyword>
<keyword id="KW-0464">Manganese</keyword>
<keyword id="KW-0479">Metal-binding</keyword>
<keyword id="KW-1185">Reference proteome</keyword>
<sequence>MNGKKLYISDVTLRDGMHAIRHQYSLENVRQIAKALDDARVDSIEVAHGDGLQGSSFNYGFGAHSDLEWIEAAADVVKHAKIATLLLPGIGTIHDLKNAWQAGARVVRVATHCTEADVSAQHIQYARELGMDTVGFLMMSHMTTPENLAKQAKLMEGYGATCIYVVDSGGAMNMSDIRDRFRALKAELKPETQTGMHAHHNLSLGVANSIAAVEEGCDRIDASLAGMGAGAGNAPLEVFIAAADKLGWQHGTDLYALMDAADDLVRPLQDRPVRVDRETLALGYAGVYSSFLRHCETAAARYGLSAVDILVELGKRRMVGGQEDMIVDVALDLRNNK</sequence>
<accession>P51020</accession>
<accession>P77787</accession>
<accession>Q2MC72</accession>
<comment type="function">
    <text evidence="3">Catalyzes the retro-aldol cleavage of 4-hydroxy-2-oxopentanoate to pyruvate and acetaldehyde. Is involved in the meta-cleavage pathway for the degradation of 3-phenylpropanoate.</text>
</comment>
<comment type="catalytic activity">
    <reaction evidence="1">
        <text>(S)-4-hydroxy-2-oxopentanoate = acetaldehyde + pyruvate</text>
        <dbReference type="Rhea" id="RHEA:22624"/>
        <dbReference type="ChEBI" id="CHEBI:15343"/>
        <dbReference type="ChEBI" id="CHEBI:15361"/>
        <dbReference type="ChEBI" id="CHEBI:73143"/>
        <dbReference type="EC" id="4.1.3.39"/>
    </reaction>
</comment>
<comment type="biophysicochemical properties">
    <phDependence>
        <text evidence="3">Optimum pH is 6.25-6.75.</text>
    </phDependence>
</comment>
<comment type="pathway">
    <text evidence="1">Aromatic compound metabolism; 3-phenylpropanoate degradation.</text>
</comment>
<comment type="subunit">
    <text evidence="1 2">Interacts with MhpF.</text>
</comment>
<comment type="miscellaneous">
    <text>Presumably stereoselective for the 4S-enantiomer of 4-hydroxy-2-ketovalerate.</text>
</comment>
<comment type="similarity">
    <text evidence="1 4">Belongs to the 4-hydroxy-2-oxovalerate aldolase family.</text>
</comment>
<protein>
    <recommendedName>
        <fullName evidence="1">4-hydroxy-2-oxovalerate aldolase</fullName>
        <shortName evidence="1">HOA</shortName>
        <ecNumber evidence="1">4.1.3.39</ecNumber>
    </recommendedName>
    <alternativeName>
        <fullName evidence="1">4-hydroxy-2-keto-pentanoic acid aldolase</fullName>
    </alternativeName>
    <alternativeName>
        <fullName evidence="1">4-hydroxy-2-oxopentanoate aldolase</fullName>
    </alternativeName>
</protein>
<proteinExistence type="evidence at protein level"/>
<name>HOA_ECOLI</name>
<dbReference type="EC" id="4.1.3.39" evidence="1"/>
<dbReference type="EMBL" id="D86239">
    <property type="protein sequence ID" value="BAA13057.1"/>
    <property type="molecule type" value="Genomic_DNA"/>
</dbReference>
<dbReference type="EMBL" id="U73857">
    <property type="protein sequence ID" value="AAB18076.1"/>
    <property type="molecule type" value="Genomic_DNA"/>
</dbReference>
<dbReference type="EMBL" id="U00096">
    <property type="protein sequence ID" value="AAC73455.1"/>
    <property type="molecule type" value="Genomic_DNA"/>
</dbReference>
<dbReference type="EMBL" id="AP009048">
    <property type="protein sequence ID" value="BAE76134.1"/>
    <property type="molecule type" value="Genomic_DNA"/>
</dbReference>
<dbReference type="EMBL" id="D85613">
    <property type="status" value="NOT_ANNOTATED_CDS"/>
    <property type="molecule type" value="Genomic_DNA"/>
</dbReference>
<dbReference type="PIR" id="H64762">
    <property type="entry name" value="H64762"/>
</dbReference>
<dbReference type="RefSeq" id="NP_414886.1">
    <property type="nucleotide sequence ID" value="NC_000913.3"/>
</dbReference>
<dbReference type="RefSeq" id="WP_001013499.1">
    <property type="nucleotide sequence ID" value="NZ_SSZK01000061.1"/>
</dbReference>
<dbReference type="SMR" id="P51020"/>
<dbReference type="BioGRID" id="4261624">
    <property type="interactions" value="23"/>
</dbReference>
<dbReference type="BioGRID" id="849406">
    <property type="interactions" value="1"/>
</dbReference>
<dbReference type="DIP" id="DIP-10209N"/>
<dbReference type="FunCoup" id="P51020">
    <property type="interactions" value="282"/>
</dbReference>
<dbReference type="IntAct" id="P51020">
    <property type="interactions" value="11"/>
</dbReference>
<dbReference type="STRING" id="511145.b0352"/>
<dbReference type="PaxDb" id="511145-b0352"/>
<dbReference type="EnsemblBacteria" id="AAC73455">
    <property type="protein sequence ID" value="AAC73455"/>
    <property type="gene ID" value="b0352"/>
</dbReference>
<dbReference type="GeneID" id="75202515"/>
<dbReference type="GeneID" id="945012"/>
<dbReference type="KEGG" id="ecj:JW0343"/>
<dbReference type="KEGG" id="eco:b0352"/>
<dbReference type="KEGG" id="ecoc:C3026_01735"/>
<dbReference type="KEGG" id="ecoc:C3026_24895"/>
<dbReference type="PATRIC" id="fig|1411691.4.peg.1926"/>
<dbReference type="EchoBASE" id="EB3077"/>
<dbReference type="eggNOG" id="COG0119">
    <property type="taxonomic scope" value="Bacteria"/>
</dbReference>
<dbReference type="HOGENOM" id="CLU_049173_0_0_6"/>
<dbReference type="InParanoid" id="P51020"/>
<dbReference type="OMA" id="MMAHTIP"/>
<dbReference type="OrthoDB" id="9803573at2"/>
<dbReference type="PhylomeDB" id="P51020"/>
<dbReference type="BioCyc" id="EcoCyc:MHPELY-MONOMER"/>
<dbReference type="BioCyc" id="MetaCyc:MHPELY-MONOMER"/>
<dbReference type="UniPathway" id="UPA00714"/>
<dbReference type="PRO" id="PR:P51020"/>
<dbReference type="Proteomes" id="UP000000625">
    <property type="component" value="Chromosome"/>
</dbReference>
<dbReference type="GO" id="GO:0003852">
    <property type="term" value="F:2-isopropylmalate synthase activity"/>
    <property type="evidence" value="ECO:0000318"/>
    <property type="project" value="GO_Central"/>
</dbReference>
<dbReference type="GO" id="GO:0008701">
    <property type="term" value="F:4-hydroxy-2-oxovalerate aldolase activity"/>
    <property type="evidence" value="ECO:0000314"/>
    <property type="project" value="EcoCyc"/>
</dbReference>
<dbReference type="GO" id="GO:0030145">
    <property type="term" value="F:manganese ion binding"/>
    <property type="evidence" value="ECO:0007669"/>
    <property type="project" value="UniProtKB-UniRule"/>
</dbReference>
<dbReference type="GO" id="GO:0019380">
    <property type="term" value="P:3-phenylpropionate catabolic process"/>
    <property type="evidence" value="ECO:0007669"/>
    <property type="project" value="UniProtKB-UniRule"/>
</dbReference>
<dbReference type="GO" id="GO:0009098">
    <property type="term" value="P:L-leucine biosynthetic process"/>
    <property type="evidence" value="ECO:0000318"/>
    <property type="project" value="GO_Central"/>
</dbReference>
<dbReference type="CDD" id="cd07943">
    <property type="entry name" value="DRE_TIM_HOA"/>
    <property type="match status" value="1"/>
</dbReference>
<dbReference type="FunFam" id="1.10.8.60:FF:000042">
    <property type="entry name" value="4-hydroxy-2-oxovalerate aldolase"/>
    <property type="match status" value="1"/>
</dbReference>
<dbReference type="FunFam" id="3.20.20.70:FF:000072">
    <property type="entry name" value="4-hydroxy-2-oxovalerate aldolase"/>
    <property type="match status" value="1"/>
</dbReference>
<dbReference type="Gene3D" id="1.10.8.60">
    <property type="match status" value="1"/>
</dbReference>
<dbReference type="Gene3D" id="3.20.20.70">
    <property type="entry name" value="Aldolase class I"/>
    <property type="match status" value="1"/>
</dbReference>
<dbReference type="HAMAP" id="MF_01656">
    <property type="entry name" value="HOA"/>
    <property type="match status" value="1"/>
</dbReference>
<dbReference type="InterPro" id="IPR050073">
    <property type="entry name" value="2-IPM_HCS-like"/>
</dbReference>
<dbReference type="InterPro" id="IPR017629">
    <property type="entry name" value="4OH_2_O-val_aldolase"/>
</dbReference>
<dbReference type="InterPro" id="IPR013785">
    <property type="entry name" value="Aldolase_TIM"/>
</dbReference>
<dbReference type="InterPro" id="IPR012425">
    <property type="entry name" value="DmpG_comm"/>
</dbReference>
<dbReference type="InterPro" id="IPR035685">
    <property type="entry name" value="DRE_TIM_HOA"/>
</dbReference>
<dbReference type="InterPro" id="IPR000891">
    <property type="entry name" value="PYR_CT"/>
</dbReference>
<dbReference type="NCBIfam" id="TIGR03217">
    <property type="entry name" value="4OH_2_O_val_ald"/>
    <property type="match status" value="1"/>
</dbReference>
<dbReference type="NCBIfam" id="NF006049">
    <property type="entry name" value="PRK08195.1"/>
    <property type="match status" value="1"/>
</dbReference>
<dbReference type="PANTHER" id="PTHR10277:SF9">
    <property type="entry name" value="2-ISOPROPYLMALATE SYNTHASE 1, CHLOROPLASTIC-RELATED"/>
    <property type="match status" value="1"/>
</dbReference>
<dbReference type="PANTHER" id="PTHR10277">
    <property type="entry name" value="HOMOCITRATE SYNTHASE-RELATED"/>
    <property type="match status" value="1"/>
</dbReference>
<dbReference type="Pfam" id="PF07836">
    <property type="entry name" value="DmpG_comm"/>
    <property type="match status" value="1"/>
</dbReference>
<dbReference type="Pfam" id="PF00682">
    <property type="entry name" value="HMGL-like"/>
    <property type="match status" value="1"/>
</dbReference>
<dbReference type="SUPFAM" id="SSF51569">
    <property type="entry name" value="Aldolase"/>
    <property type="match status" value="1"/>
</dbReference>
<dbReference type="SUPFAM" id="SSF89000">
    <property type="entry name" value="post-HMGL domain-like"/>
    <property type="match status" value="1"/>
</dbReference>
<dbReference type="PROSITE" id="PS50991">
    <property type="entry name" value="PYR_CT"/>
    <property type="match status" value="1"/>
</dbReference>
<reference key="1">
    <citation type="submission" date="1996-06" db="EMBL/GenBank/DDBJ databases">
        <title>Complete sequence of the mhp operon.</title>
        <authorList>
            <person name="Kawamukai M."/>
        </authorList>
    </citation>
    <scope>NUCLEOTIDE SEQUENCE [GENOMIC DNA]</scope>
    <source>
        <strain>K12 / W3110 / ATCC 27325 / DSM 5911</strain>
    </source>
</reference>
<reference key="2">
    <citation type="submission" date="1997-01" db="EMBL/GenBank/DDBJ databases">
        <title>Sequence of minutes 4-25 of Escherichia coli.</title>
        <authorList>
            <person name="Chung E."/>
            <person name="Allen E."/>
            <person name="Araujo R."/>
            <person name="Aparicio A.M."/>
            <person name="Davis K."/>
            <person name="Duncan M."/>
            <person name="Federspiel N."/>
            <person name="Hyman R."/>
            <person name="Kalman S."/>
            <person name="Komp C."/>
            <person name="Kurdi O."/>
            <person name="Lew H."/>
            <person name="Lin D."/>
            <person name="Namath A."/>
            <person name="Oefner P."/>
            <person name="Roberts D."/>
            <person name="Schramm S."/>
            <person name="Davis R.W."/>
        </authorList>
    </citation>
    <scope>NUCLEOTIDE SEQUENCE [LARGE SCALE GENOMIC DNA]</scope>
    <source>
        <strain>K12 / MG1655 / ATCC 47076</strain>
    </source>
</reference>
<reference key="3">
    <citation type="journal article" date="1997" name="Science">
        <title>The complete genome sequence of Escherichia coli K-12.</title>
        <authorList>
            <person name="Blattner F.R."/>
            <person name="Plunkett G. III"/>
            <person name="Bloch C.A."/>
            <person name="Perna N.T."/>
            <person name="Burland V."/>
            <person name="Riley M."/>
            <person name="Collado-Vides J."/>
            <person name="Glasner J.D."/>
            <person name="Rode C.K."/>
            <person name="Mayhew G.F."/>
            <person name="Gregor J."/>
            <person name="Davis N.W."/>
            <person name="Kirkpatrick H.A."/>
            <person name="Goeden M.A."/>
            <person name="Rose D.J."/>
            <person name="Mau B."/>
            <person name="Shao Y."/>
        </authorList>
    </citation>
    <scope>NUCLEOTIDE SEQUENCE [LARGE SCALE GENOMIC DNA]</scope>
    <source>
        <strain>K12 / MG1655 / ATCC 47076</strain>
    </source>
</reference>
<reference key="4">
    <citation type="journal article" date="2006" name="Mol. Syst. Biol.">
        <title>Highly accurate genome sequences of Escherichia coli K-12 strains MG1655 and W3110.</title>
        <authorList>
            <person name="Hayashi K."/>
            <person name="Morooka N."/>
            <person name="Yamamoto Y."/>
            <person name="Fujita K."/>
            <person name="Isono K."/>
            <person name="Choi S."/>
            <person name="Ohtsubo E."/>
            <person name="Baba T."/>
            <person name="Wanner B.L."/>
            <person name="Mori H."/>
            <person name="Horiuchi T."/>
        </authorList>
    </citation>
    <scope>NUCLEOTIDE SEQUENCE [LARGE SCALE GENOMIC DNA]</scope>
    <source>
        <strain>K12 / W3110 / ATCC 27325 / DSM 5911</strain>
    </source>
</reference>
<reference key="5">
    <citation type="submission" date="1995-11" db="EMBL/GenBank/DDBJ databases">
        <authorList>
            <person name="Nashimoto H."/>
            <person name="Saito N."/>
        </authorList>
    </citation>
    <scope>NUCLEOTIDE SEQUENCE [GENOMIC DNA] OF 95-337</scope>
    <source>
        <strain>K12</strain>
    </source>
</reference>
<reference key="6">
    <citation type="journal article" date="1998" name="Appl. Environ. Microbiol.">
        <title>Substrate selectivity and biochemical properties of 4-hydroxy-2-keto-pentanoic acid aldolase from Escherichia coli.</title>
        <authorList>
            <person name="Pollard J.R."/>
            <person name="Rialland D."/>
            <person name="Bugg T.D."/>
        </authorList>
    </citation>
    <scope>BIOPHYSICOCHEMICAL PROPERTIES</scope>
    <scope>FUNCTION</scope>
    <scope>SUBSTRATE SPECIFICITY</scope>
</reference>
<reference key="7">
    <citation type="journal article" date="2006" name="Biochem. Biophys. Res. Commun.">
        <title>Coupled expression of MhpE aldolase and MhpF dehydrogenase in Escherichia coli.</title>
        <authorList>
            <person name="Lee S.J."/>
            <person name="Ko J.H."/>
            <person name="Kang H.Y."/>
            <person name="Lee Y."/>
        </authorList>
    </citation>
    <scope>INTERACTION WITH MHPF</scope>
</reference>
<organism>
    <name type="scientific">Escherichia coli (strain K12)</name>
    <dbReference type="NCBI Taxonomy" id="83333"/>
    <lineage>
        <taxon>Bacteria</taxon>
        <taxon>Pseudomonadati</taxon>
        <taxon>Pseudomonadota</taxon>
        <taxon>Gammaproteobacteria</taxon>
        <taxon>Enterobacterales</taxon>
        <taxon>Enterobacteriaceae</taxon>
        <taxon>Escherichia</taxon>
    </lineage>
</organism>
<feature type="chain" id="PRO_0000096470" description="4-hydroxy-2-oxovalerate aldolase">
    <location>
        <begin position="1"/>
        <end position="337"/>
    </location>
</feature>
<feature type="domain" description="Pyruvate carboxyltransferase" evidence="1">
    <location>
        <begin position="6"/>
        <end position="258"/>
    </location>
</feature>
<feature type="active site" description="Proton acceptor" evidence="1">
    <location>
        <position position="18"/>
    </location>
</feature>
<feature type="binding site" evidence="1">
    <location>
        <begin position="14"/>
        <end position="15"/>
    </location>
    <ligand>
        <name>substrate</name>
    </ligand>
</feature>
<feature type="binding site" evidence="1">
    <location>
        <position position="15"/>
    </location>
    <ligand>
        <name>Mn(2+)</name>
        <dbReference type="ChEBI" id="CHEBI:29035"/>
    </ligand>
</feature>
<feature type="binding site" evidence="1">
    <location>
        <position position="168"/>
    </location>
    <ligand>
        <name>substrate</name>
    </ligand>
</feature>
<feature type="binding site" evidence="1">
    <location>
        <position position="197"/>
    </location>
    <ligand>
        <name>Mn(2+)</name>
        <dbReference type="ChEBI" id="CHEBI:29035"/>
    </ligand>
</feature>
<feature type="binding site" evidence="1">
    <location>
        <position position="197"/>
    </location>
    <ligand>
        <name>substrate</name>
    </ligand>
</feature>
<feature type="binding site" evidence="1">
    <location>
        <position position="199"/>
    </location>
    <ligand>
        <name>Mn(2+)</name>
        <dbReference type="ChEBI" id="CHEBI:29035"/>
    </ligand>
</feature>
<feature type="binding site" evidence="1">
    <location>
        <position position="288"/>
    </location>
    <ligand>
        <name>substrate</name>
    </ligand>
</feature>
<feature type="site" description="Transition state stabilizer" evidence="1">
    <location>
        <position position="14"/>
    </location>
</feature>